<sequence>MSLDSENTISENNDVRINNINLIASIVLWLLFVITVIGTFKPIHRVSMESNFSKYYKYTYCVDDKCTCVDYFTYGKVTIYCYNKNSVNCLAINWDNVGIIVILIFMLMIIMNGFYQMMKQKISVEDLVIMNQQLEYQRQNRMNNLYYHDNYGNLRMRMPGDYGYY</sequence>
<accession>Q5UPJ5</accession>
<evidence type="ECO:0000255" key="1"/>
<evidence type="ECO:0000305" key="2"/>
<organismHost>
    <name type="scientific">Acanthamoeba polyphaga</name>
    <name type="common">Amoeba</name>
    <dbReference type="NCBI Taxonomy" id="5757"/>
</organismHost>
<comment type="subcellular location">
    <subcellularLocation>
        <location evidence="2">Membrane</location>
        <topology evidence="2">Multi-pass membrane protein</topology>
    </subcellularLocation>
</comment>
<reference key="1">
    <citation type="journal article" date="2004" name="Science">
        <title>The 1.2-megabase genome sequence of Mimivirus.</title>
        <authorList>
            <person name="Raoult D."/>
            <person name="Audic S."/>
            <person name="Robert C."/>
            <person name="Abergel C."/>
            <person name="Renesto P."/>
            <person name="Ogata H."/>
            <person name="La Scola B."/>
            <person name="Susan M."/>
            <person name="Claverie J.-M."/>
        </authorList>
    </citation>
    <scope>NUCLEOTIDE SEQUENCE [LARGE SCALE GENOMIC DNA]</scope>
    <source>
        <strain>Rowbotham-Bradford</strain>
    </source>
</reference>
<protein>
    <recommendedName>
        <fullName>Uncharacterized protein R119</fullName>
    </recommendedName>
</protein>
<organism>
    <name type="scientific">Acanthamoeba polyphaga mimivirus</name>
    <name type="common">APMV</name>
    <dbReference type="NCBI Taxonomy" id="212035"/>
    <lineage>
        <taxon>Viruses</taxon>
        <taxon>Varidnaviria</taxon>
        <taxon>Bamfordvirae</taxon>
        <taxon>Nucleocytoviricota</taxon>
        <taxon>Megaviricetes</taxon>
        <taxon>Imitervirales</taxon>
        <taxon>Mimiviridae</taxon>
        <taxon>Megamimivirinae</taxon>
        <taxon>Mimivirus</taxon>
        <taxon>Mimivirus bradfordmassiliense</taxon>
    </lineage>
</organism>
<proteinExistence type="predicted"/>
<feature type="chain" id="PRO_0000253261" description="Uncharacterized protein R119">
    <location>
        <begin position="1"/>
        <end position="165"/>
    </location>
</feature>
<feature type="transmembrane region" description="Helical" evidence="1">
    <location>
        <begin position="20"/>
        <end position="40"/>
    </location>
</feature>
<feature type="transmembrane region" description="Helical" evidence="1">
    <location>
        <begin position="97"/>
        <end position="117"/>
    </location>
</feature>
<feature type="glycosylation site" description="N-linked (GlcNAc...) asparagine; by host" evidence="1">
    <location>
        <position position="51"/>
    </location>
</feature>
<gene>
    <name type="ordered locus">MIMI_R119</name>
</gene>
<keyword id="KW-0325">Glycoprotein</keyword>
<keyword id="KW-0472">Membrane</keyword>
<keyword id="KW-1185">Reference proteome</keyword>
<keyword id="KW-0812">Transmembrane</keyword>
<keyword id="KW-1133">Transmembrane helix</keyword>
<dbReference type="EMBL" id="AY653733">
    <property type="protein sequence ID" value="AAV50394.1"/>
    <property type="molecule type" value="Genomic_DNA"/>
</dbReference>
<dbReference type="SMR" id="Q5UPJ5"/>
<dbReference type="KEGG" id="vg:9924718"/>
<dbReference type="OrthoDB" id="41383at10239"/>
<dbReference type="Proteomes" id="UP000001134">
    <property type="component" value="Genome"/>
</dbReference>
<dbReference type="GO" id="GO:0016020">
    <property type="term" value="C:membrane"/>
    <property type="evidence" value="ECO:0007669"/>
    <property type="project" value="UniProtKB-SubCell"/>
</dbReference>
<name>YR119_MIMIV</name>